<evidence type="ECO:0000255" key="1">
    <source>
        <dbReference type="HAMAP-Rule" id="MF_01540"/>
    </source>
</evidence>
<feature type="chain" id="PRO_0000388515" description="Sulfite reductase [NADPH] hemoprotein beta-component">
    <location>
        <begin position="1"/>
        <end position="565"/>
    </location>
</feature>
<feature type="binding site" evidence="1">
    <location>
        <position position="429"/>
    </location>
    <ligand>
        <name>[4Fe-4S] cluster</name>
        <dbReference type="ChEBI" id="CHEBI:49883"/>
    </ligand>
</feature>
<feature type="binding site" evidence="1">
    <location>
        <position position="435"/>
    </location>
    <ligand>
        <name>[4Fe-4S] cluster</name>
        <dbReference type="ChEBI" id="CHEBI:49883"/>
    </ligand>
</feature>
<feature type="binding site" evidence="1">
    <location>
        <position position="474"/>
    </location>
    <ligand>
        <name>[4Fe-4S] cluster</name>
        <dbReference type="ChEBI" id="CHEBI:49883"/>
    </ligand>
</feature>
<feature type="binding site" evidence="1">
    <location>
        <position position="478"/>
    </location>
    <ligand>
        <name>[4Fe-4S] cluster</name>
        <dbReference type="ChEBI" id="CHEBI:49883"/>
    </ligand>
</feature>
<feature type="binding site" description="axial binding residue" evidence="1">
    <location>
        <position position="478"/>
    </location>
    <ligand>
        <name>siroheme</name>
        <dbReference type="ChEBI" id="CHEBI:60052"/>
    </ligand>
    <ligandPart>
        <name>Fe</name>
        <dbReference type="ChEBI" id="CHEBI:18248"/>
    </ligandPart>
</feature>
<keyword id="KW-0004">4Fe-4S</keyword>
<keyword id="KW-0028">Amino-acid biosynthesis</keyword>
<keyword id="KW-0198">Cysteine biosynthesis</keyword>
<keyword id="KW-0349">Heme</keyword>
<keyword id="KW-0408">Iron</keyword>
<keyword id="KW-0411">Iron-sulfur</keyword>
<keyword id="KW-0479">Metal-binding</keyword>
<keyword id="KW-0521">NADP</keyword>
<keyword id="KW-0560">Oxidoreductase</keyword>
<keyword id="KW-1185">Reference proteome</keyword>
<protein>
    <recommendedName>
        <fullName evidence="1">Sulfite reductase [NADPH] hemoprotein beta-component</fullName>
        <shortName evidence="1">SiR-HP</shortName>
        <shortName evidence="1">SiRHP</shortName>
        <ecNumber evidence="1">1.8.1.2</ecNumber>
    </recommendedName>
</protein>
<gene>
    <name evidence="1" type="primary">cysI</name>
    <name type="ordered locus">Shew_0666</name>
</gene>
<name>CYSI_SHELP</name>
<dbReference type="EC" id="1.8.1.2" evidence="1"/>
<dbReference type="EMBL" id="CP000606">
    <property type="protein sequence ID" value="ABO22538.1"/>
    <property type="molecule type" value="Genomic_DNA"/>
</dbReference>
<dbReference type="RefSeq" id="WP_011864472.1">
    <property type="nucleotide sequence ID" value="NC_009092.1"/>
</dbReference>
<dbReference type="SMR" id="A3QAP0"/>
<dbReference type="STRING" id="323850.Shew_0666"/>
<dbReference type="KEGG" id="slo:Shew_0666"/>
<dbReference type="eggNOG" id="COG0155">
    <property type="taxonomic scope" value="Bacteria"/>
</dbReference>
<dbReference type="HOGENOM" id="CLU_001975_3_2_6"/>
<dbReference type="OrthoDB" id="3189055at2"/>
<dbReference type="UniPathway" id="UPA00140">
    <property type="reaction ID" value="UER00207"/>
</dbReference>
<dbReference type="Proteomes" id="UP000001558">
    <property type="component" value="Chromosome"/>
</dbReference>
<dbReference type="GO" id="GO:0009337">
    <property type="term" value="C:sulfite reductase complex (NADPH)"/>
    <property type="evidence" value="ECO:0007669"/>
    <property type="project" value="InterPro"/>
</dbReference>
<dbReference type="GO" id="GO:0051539">
    <property type="term" value="F:4 iron, 4 sulfur cluster binding"/>
    <property type="evidence" value="ECO:0007669"/>
    <property type="project" value="UniProtKB-KW"/>
</dbReference>
<dbReference type="GO" id="GO:0020037">
    <property type="term" value="F:heme binding"/>
    <property type="evidence" value="ECO:0007669"/>
    <property type="project" value="InterPro"/>
</dbReference>
<dbReference type="GO" id="GO:0046872">
    <property type="term" value="F:metal ion binding"/>
    <property type="evidence" value="ECO:0007669"/>
    <property type="project" value="UniProtKB-KW"/>
</dbReference>
<dbReference type="GO" id="GO:0050661">
    <property type="term" value="F:NADP binding"/>
    <property type="evidence" value="ECO:0007669"/>
    <property type="project" value="InterPro"/>
</dbReference>
<dbReference type="GO" id="GO:0050311">
    <property type="term" value="F:sulfite reductase (ferredoxin) activity"/>
    <property type="evidence" value="ECO:0007669"/>
    <property type="project" value="TreeGrafter"/>
</dbReference>
<dbReference type="GO" id="GO:0004783">
    <property type="term" value="F:sulfite reductase (NADPH) activity"/>
    <property type="evidence" value="ECO:0007669"/>
    <property type="project" value="UniProtKB-UniRule"/>
</dbReference>
<dbReference type="GO" id="GO:0019344">
    <property type="term" value="P:cysteine biosynthetic process"/>
    <property type="evidence" value="ECO:0007669"/>
    <property type="project" value="UniProtKB-KW"/>
</dbReference>
<dbReference type="GO" id="GO:0070814">
    <property type="term" value="P:hydrogen sulfide biosynthetic process"/>
    <property type="evidence" value="ECO:0007669"/>
    <property type="project" value="UniProtKB-UniRule"/>
</dbReference>
<dbReference type="GO" id="GO:0000103">
    <property type="term" value="P:sulfate assimilation"/>
    <property type="evidence" value="ECO:0007669"/>
    <property type="project" value="UniProtKB-UniRule"/>
</dbReference>
<dbReference type="FunFam" id="3.30.413.10:FF:000003">
    <property type="entry name" value="Sulfite reductase [NADPH] hemoprotein beta-component"/>
    <property type="match status" value="1"/>
</dbReference>
<dbReference type="FunFam" id="3.30.413.10:FF:000004">
    <property type="entry name" value="Sulfite reductase [NADPH] hemoprotein beta-component"/>
    <property type="match status" value="1"/>
</dbReference>
<dbReference type="Gene3D" id="3.30.413.10">
    <property type="entry name" value="Sulfite Reductase Hemoprotein, domain 1"/>
    <property type="match status" value="2"/>
</dbReference>
<dbReference type="HAMAP" id="MF_01540">
    <property type="entry name" value="CysI"/>
    <property type="match status" value="1"/>
</dbReference>
<dbReference type="InterPro" id="IPR011786">
    <property type="entry name" value="CysI"/>
</dbReference>
<dbReference type="InterPro" id="IPR005117">
    <property type="entry name" value="NiRdtase/SiRdtase_haem-b_fer"/>
</dbReference>
<dbReference type="InterPro" id="IPR036136">
    <property type="entry name" value="Nit/Sulf_reduc_fer-like_dom_sf"/>
</dbReference>
<dbReference type="InterPro" id="IPR006067">
    <property type="entry name" value="NO2/SO3_Rdtase_4Fe4S_dom"/>
</dbReference>
<dbReference type="InterPro" id="IPR045169">
    <property type="entry name" value="NO2/SO3_Rdtase_4Fe4S_prot"/>
</dbReference>
<dbReference type="InterPro" id="IPR045854">
    <property type="entry name" value="NO2/SO3_Rdtase_4Fe4S_sf"/>
</dbReference>
<dbReference type="InterPro" id="IPR006066">
    <property type="entry name" value="NO2/SO3_Rdtase_FeS/sirohaem_BS"/>
</dbReference>
<dbReference type="NCBIfam" id="TIGR02041">
    <property type="entry name" value="CysI"/>
    <property type="match status" value="1"/>
</dbReference>
<dbReference type="NCBIfam" id="NF010029">
    <property type="entry name" value="PRK13504.1"/>
    <property type="match status" value="1"/>
</dbReference>
<dbReference type="PANTHER" id="PTHR11493:SF47">
    <property type="entry name" value="SULFITE REDUCTASE [NADPH] SUBUNIT BETA"/>
    <property type="match status" value="1"/>
</dbReference>
<dbReference type="PANTHER" id="PTHR11493">
    <property type="entry name" value="SULFITE REDUCTASE [NADPH] SUBUNIT BETA-RELATED"/>
    <property type="match status" value="1"/>
</dbReference>
<dbReference type="Pfam" id="PF01077">
    <property type="entry name" value="NIR_SIR"/>
    <property type="match status" value="1"/>
</dbReference>
<dbReference type="Pfam" id="PF03460">
    <property type="entry name" value="NIR_SIR_ferr"/>
    <property type="match status" value="2"/>
</dbReference>
<dbReference type="PRINTS" id="PR00397">
    <property type="entry name" value="SIROHAEM"/>
</dbReference>
<dbReference type="SUPFAM" id="SSF56014">
    <property type="entry name" value="Nitrite and sulphite reductase 4Fe-4S domain-like"/>
    <property type="match status" value="2"/>
</dbReference>
<dbReference type="SUPFAM" id="SSF55124">
    <property type="entry name" value="Nitrite/Sulfite reductase N-terminal domain-like"/>
    <property type="match status" value="2"/>
</dbReference>
<dbReference type="PROSITE" id="PS00365">
    <property type="entry name" value="NIR_SIR"/>
    <property type="match status" value="1"/>
</dbReference>
<proteinExistence type="inferred from homology"/>
<comment type="function">
    <text evidence="1">Component of the sulfite reductase complex that catalyzes the 6-electron reduction of sulfite to sulfide. This is one of several activities required for the biosynthesis of L-cysteine from sulfate.</text>
</comment>
<comment type="catalytic activity">
    <reaction evidence="1">
        <text>hydrogen sulfide + 3 NADP(+) + 3 H2O = sulfite + 3 NADPH + 4 H(+)</text>
        <dbReference type="Rhea" id="RHEA:13801"/>
        <dbReference type="ChEBI" id="CHEBI:15377"/>
        <dbReference type="ChEBI" id="CHEBI:15378"/>
        <dbReference type="ChEBI" id="CHEBI:17359"/>
        <dbReference type="ChEBI" id="CHEBI:29919"/>
        <dbReference type="ChEBI" id="CHEBI:57783"/>
        <dbReference type="ChEBI" id="CHEBI:58349"/>
        <dbReference type="EC" id="1.8.1.2"/>
    </reaction>
</comment>
<comment type="cofactor">
    <cofactor evidence="1">
        <name>siroheme</name>
        <dbReference type="ChEBI" id="CHEBI:60052"/>
    </cofactor>
    <text evidence="1">Binds 1 siroheme per subunit.</text>
</comment>
<comment type="cofactor">
    <cofactor evidence="1">
        <name>[4Fe-4S] cluster</name>
        <dbReference type="ChEBI" id="CHEBI:49883"/>
    </cofactor>
    <text evidence="1">Binds 1 [4Fe-4S] cluster per subunit.</text>
</comment>
<comment type="pathway">
    <text evidence="1">Sulfur metabolism; hydrogen sulfide biosynthesis; hydrogen sulfide from sulfite (NADPH route): step 1/1.</text>
</comment>
<comment type="subunit">
    <text evidence="1">Alpha(8)-beta(8). The alpha component is a flavoprotein, the beta component is a hemoprotein.</text>
</comment>
<comment type="similarity">
    <text evidence="1">Belongs to the nitrite and sulfite reductase 4Fe-4S domain family.</text>
</comment>
<organism>
    <name type="scientific">Shewanella loihica (strain ATCC BAA-1088 / PV-4)</name>
    <dbReference type="NCBI Taxonomy" id="323850"/>
    <lineage>
        <taxon>Bacteria</taxon>
        <taxon>Pseudomonadati</taxon>
        <taxon>Pseudomonadota</taxon>
        <taxon>Gammaproteobacteria</taxon>
        <taxon>Alteromonadales</taxon>
        <taxon>Shewanellaceae</taxon>
        <taxon>Shewanella</taxon>
    </lineage>
</organism>
<sequence length="565" mass="63125">MSDQKLSVNEYLKTDSNYLRGTIEEGLDTSLTGAFNDADQQLIKFHGFYQQDDRDLRNERKEQKLEPLYSFMLRARVAGGVCTPKQWLGVDKIASTLTSSNSIRLTTRQTFQYHGIPKRNLKTLIQDLDREALDSIAACGDVNRNVMCNPNPVESKLHQQAYYWAKKLSDNYLPRTKAYAEIWLGDDKVAVSESEEVEPVYGKTYLPRKFKMAVAVPPDNDVDVYTNDLGFIAVAEDGELVGFNMVAGGGMGSTHGEVATFPRLGDDFGFIKAEDCLKFAEAVLKVQRDWGNRSDRKQSRLKYTIVKHGFEAFKAEVEQRAGVKFEPKREVVIGDRGDRYGWIKGVDNNWHLTLFIEGGRIKDLPGQPLQTGLREIALVHKGDFRMTANQNIIIAGVAEEDKAQIEALARSHGLMGKLISPTRGHSIACVALPTCALAMAEAERYFPDFMTKVEALQEKHGFLEQPIVIRMTGCPNGCARPFAAEIGLVGKAPGRYNLYLGASFEGTRLNKLYRENIQEAEILAALDELFARYVKEREAGETFGNFTVRVGVVKAVIDAAKDFHG</sequence>
<reference key="1">
    <citation type="submission" date="2007-03" db="EMBL/GenBank/DDBJ databases">
        <title>Complete sequence of Shewanella loihica PV-4.</title>
        <authorList>
            <consortium name="US DOE Joint Genome Institute"/>
            <person name="Copeland A."/>
            <person name="Lucas S."/>
            <person name="Lapidus A."/>
            <person name="Barry K."/>
            <person name="Detter J.C."/>
            <person name="Glavina del Rio T."/>
            <person name="Hammon N."/>
            <person name="Israni S."/>
            <person name="Dalin E."/>
            <person name="Tice H."/>
            <person name="Pitluck S."/>
            <person name="Chain P."/>
            <person name="Malfatti S."/>
            <person name="Shin M."/>
            <person name="Vergez L."/>
            <person name="Schmutz J."/>
            <person name="Larimer F."/>
            <person name="Land M."/>
            <person name="Hauser L."/>
            <person name="Kyrpides N."/>
            <person name="Mikhailova N."/>
            <person name="Romine M.F."/>
            <person name="Serres G."/>
            <person name="Fredrickson J."/>
            <person name="Tiedje J."/>
            <person name="Richardson P."/>
        </authorList>
    </citation>
    <scope>NUCLEOTIDE SEQUENCE [LARGE SCALE GENOMIC DNA]</scope>
    <source>
        <strain>ATCC BAA-1088 / PV-4</strain>
    </source>
</reference>
<accession>A3QAP0</accession>